<keyword id="KW-0687">Ribonucleoprotein</keyword>
<keyword id="KW-0689">Ribosomal protein</keyword>
<keyword id="KW-0694">RNA-binding</keyword>
<keyword id="KW-0699">rRNA-binding</keyword>
<reference key="1">
    <citation type="submission" date="2008-08" db="EMBL/GenBank/DDBJ databases">
        <title>Complete sequence of Vibrio fischeri strain MJ11.</title>
        <authorList>
            <person name="Mandel M.J."/>
            <person name="Stabb E.V."/>
            <person name="Ruby E.G."/>
            <person name="Ferriera S."/>
            <person name="Johnson J."/>
            <person name="Kravitz S."/>
            <person name="Beeson K."/>
            <person name="Sutton G."/>
            <person name="Rogers Y.-H."/>
            <person name="Friedman R."/>
            <person name="Frazier M."/>
            <person name="Venter J.C."/>
        </authorList>
    </citation>
    <scope>NUCLEOTIDE SEQUENCE [LARGE SCALE GENOMIC DNA]</scope>
    <source>
        <strain>MJ11</strain>
    </source>
</reference>
<protein>
    <recommendedName>
        <fullName evidence="1">Large ribosomal subunit protein uL6</fullName>
    </recommendedName>
    <alternativeName>
        <fullName evidence="2">50S ribosomal protein L6</fullName>
    </alternativeName>
</protein>
<dbReference type="EMBL" id="CP001139">
    <property type="protein sequence ID" value="ACH64897.1"/>
    <property type="molecule type" value="Genomic_DNA"/>
</dbReference>
<dbReference type="RefSeq" id="WP_005417251.1">
    <property type="nucleotide sequence ID" value="NC_011184.1"/>
</dbReference>
<dbReference type="SMR" id="B5FG24"/>
<dbReference type="KEGG" id="vfm:VFMJ11_0240"/>
<dbReference type="HOGENOM" id="CLU_065464_1_2_6"/>
<dbReference type="Proteomes" id="UP000001857">
    <property type="component" value="Chromosome I"/>
</dbReference>
<dbReference type="GO" id="GO:0022625">
    <property type="term" value="C:cytosolic large ribosomal subunit"/>
    <property type="evidence" value="ECO:0007669"/>
    <property type="project" value="TreeGrafter"/>
</dbReference>
<dbReference type="GO" id="GO:0019843">
    <property type="term" value="F:rRNA binding"/>
    <property type="evidence" value="ECO:0007669"/>
    <property type="project" value="UniProtKB-UniRule"/>
</dbReference>
<dbReference type="GO" id="GO:0003735">
    <property type="term" value="F:structural constituent of ribosome"/>
    <property type="evidence" value="ECO:0007669"/>
    <property type="project" value="InterPro"/>
</dbReference>
<dbReference type="GO" id="GO:0002181">
    <property type="term" value="P:cytoplasmic translation"/>
    <property type="evidence" value="ECO:0007669"/>
    <property type="project" value="TreeGrafter"/>
</dbReference>
<dbReference type="FunFam" id="3.90.930.12:FF:000001">
    <property type="entry name" value="50S ribosomal protein L6"/>
    <property type="match status" value="1"/>
</dbReference>
<dbReference type="FunFam" id="3.90.930.12:FF:000002">
    <property type="entry name" value="50S ribosomal protein L6"/>
    <property type="match status" value="1"/>
</dbReference>
<dbReference type="Gene3D" id="3.90.930.12">
    <property type="entry name" value="Ribosomal protein L6, alpha-beta domain"/>
    <property type="match status" value="2"/>
</dbReference>
<dbReference type="HAMAP" id="MF_01365_B">
    <property type="entry name" value="Ribosomal_uL6_B"/>
    <property type="match status" value="1"/>
</dbReference>
<dbReference type="InterPro" id="IPR000702">
    <property type="entry name" value="Ribosomal_uL6-like"/>
</dbReference>
<dbReference type="InterPro" id="IPR036789">
    <property type="entry name" value="Ribosomal_uL6-like_a/b-dom_sf"/>
</dbReference>
<dbReference type="InterPro" id="IPR020040">
    <property type="entry name" value="Ribosomal_uL6_a/b-dom"/>
</dbReference>
<dbReference type="InterPro" id="IPR019906">
    <property type="entry name" value="Ribosomal_uL6_bac-type"/>
</dbReference>
<dbReference type="InterPro" id="IPR002358">
    <property type="entry name" value="Ribosomal_uL6_CS"/>
</dbReference>
<dbReference type="NCBIfam" id="TIGR03654">
    <property type="entry name" value="L6_bact"/>
    <property type="match status" value="1"/>
</dbReference>
<dbReference type="PANTHER" id="PTHR11655">
    <property type="entry name" value="60S/50S RIBOSOMAL PROTEIN L6/L9"/>
    <property type="match status" value="1"/>
</dbReference>
<dbReference type="PANTHER" id="PTHR11655:SF14">
    <property type="entry name" value="LARGE RIBOSOMAL SUBUNIT PROTEIN UL6M"/>
    <property type="match status" value="1"/>
</dbReference>
<dbReference type="Pfam" id="PF00347">
    <property type="entry name" value="Ribosomal_L6"/>
    <property type="match status" value="2"/>
</dbReference>
<dbReference type="PIRSF" id="PIRSF002162">
    <property type="entry name" value="Ribosomal_L6"/>
    <property type="match status" value="1"/>
</dbReference>
<dbReference type="PRINTS" id="PR00059">
    <property type="entry name" value="RIBOSOMALL6"/>
</dbReference>
<dbReference type="SUPFAM" id="SSF56053">
    <property type="entry name" value="Ribosomal protein L6"/>
    <property type="match status" value="2"/>
</dbReference>
<dbReference type="PROSITE" id="PS00525">
    <property type="entry name" value="RIBOSOMAL_L6_1"/>
    <property type="match status" value="1"/>
</dbReference>
<organism>
    <name type="scientific">Aliivibrio fischeri (strain MJ11)</name>
    <name type="common">Vibrio fischeri</name>
    <dbReference type="NCBI Taxonomy" id="388396"/>
    <lineage>
        <taxon>Bacteria</taxon>
        <taxon>Pseudomonadati</taxon>
        <taxon>Pseudomonadota</taxon>
        <taxon>Gammaproteobacteria</taxon>
        <taxon>Vibrionales</taxon>
        <taxon>Vibrionaceae</taxon>
        <taxon>Aliivibrio</taxon>
    </lineage>
</organism>
<accession>B5FG24</accession>
<comment type="function">
    <text evidence="1">This protein binds to the 23S rRNA, and is important in its secondary structure. It is located near the subunit interface in the base of the L7/L12 stalk, and near the tRNA binding site of the peptidyltransferase center.</text>
</comment>
<comment type="subunit">
    <text evidence="1">Part of the 50S ribosomal subunit.</text>
</comment>
<comment type="similarity">
    <text evidence="1">Belongs to the universal ribosomal protein uL6 family.</text>
</comment>
<proteinExistence type="inferred from homology"/>
<evidence type="ECO:0000255" key="1">
    <source>
        <dbReference type="HAMAP-Rule" id="MF_01365"/>
    </source>
</evidence>
<evidence type="ECO:0000305" key="2"/>
<feature type="chain" id="PRO_1000144067" description="Large ribosomal subunit protein uL6">
    <location>
        <begin position="1"/>
        <end position="177"/>
    </location>
</feature>
<name>RL6_ALIFM</name>
<gene>
    <name evidence="1" type="primary">rplF</name>
    <name type="ordered locus">VFMJ11_0240</name>
</gene>
<sequence>MSRVAKAPVVIPAGVEVKLNGQEITIKGGKGELTRVLNDAVVVSQEDNTIVFGPREGVTNAWAQAGTARALVNNMVIGVNEGFTKKLILKGVGYRAAMKGNAVGLTLGFSHPVEHALPEGIKAECPTQTEIVVTGCDKQLVGQVAADLRSYRQPEPYKGKGVRYADEIVRTKEAKKK</sequence>